<keyword id="KW-0997">Cell inner membrane</keyword>
<keyword id="KW-1003">Cell membrane</keyword>
<keyword id="KW-0342">GTP-binding</keyword>
<keyword id="KW-0378">Hydrolase</keyword>
<keyword id="KW-0472">Membrane</keyword>
<keyword id="KW-0547">Nucleotide-binding</keyword>
<keyword id="KW-0648">Protein biosynthesis</keyword>
<keyword id="KW-1185">Reference proteome</keyword>
<feature type="chain" id="PRO_1000092403" description="Elongation factor 4">
    <location>
        <begin position="1"/>
        <end position="599"/>
    </location>
</feature>
<feature type="domain" description="tr-type G">
    <location>
        <begin position="4"/>
        <end position="186"/>
    </location>
</feature>
<feature type="binding site" evidence="1">
    <location>
        <begin position="16"/>
        <end position="21"/>
    </location>
    <ligand>
        <name>GTP</name>
        <dbReference type="ChEBI" id="CHEBI:37565"/>
    </ligand>
</feature>
<feature type="binding site" evidence="1">
    <location>
        <begin position="133"/>
        <end position="136"/>
    </location>
    <ligand>
        <name>GTP</name>
        <dbReference type="ChEBI" id="CHEBI:37565"/>
    </ligand>
</feature>
<name>LEPA_CITBB</name>
<protein>
    <recommendedName>
        <fullName evidence="1">Elongation factor 4</fullName>
        <shortName evidence="1">EF-4</shortName>
        <ecNumber evidence="1">3.6.5.n1</ecNumber>
    </recommendedName>
    <alternativeName>
        <fullName evidence="1">Ribosomal back-translocase LepA</fullName>
    </alternativeName>
</protein>
<organism>
    <name type="scientific">Citrifermentans bemidjiense (strain ATCC BAA-1014 / DSM 16622 / JCM 12645 / Bem)</name>
    <name type="common">Geobacter bemidjiensis</name>
    <dbReference type="NCBI Taxonomy" id="404380"/>
    <lineage>
        <taxon>Bacteria</taxon>
        <taxon>Pseudomonadati</taxon>
        <taxon>Thermodesulfobacteriota</taxon>
        <taxon>Desulfuromonadia</taxon>
        <taxon>Geobacterales</taxon>
        <taxon>Geobacteraceae</taxon>
        <taxon>Citrifermentans</taxon>
    </lineage>
</organism>
<gene>
    <name evidence="1" type="primary">lepA</name>
    <name type="ordered locus">Gbem_1883</name>
</gene>
<dbReference type="EC" id="3.6.5.n1" evidence="1"/>
<dbReference type="EMBL" id="CP001124">
    <property type="protein sequence ID" value="ACH38897.1"/>
    <property type="molecule type" value="Genomic_DNA"/>
</dbReference>
<dbReference type="RefSeq" id="WP_012530315.1">
    <property type="nucleotide sequence ID" value="NC_011146.1"/>
</dbReference>
<dbReference type="SMR" id="B5EB36"/>
<dbReference type="STRING" id="404380.Gbem_1883"/>
<dbReference type="KEGG" id="gbm:Gbem_1883"/>
<dbReference type="eggNOG" id="COG0481">
    <property type="taxonomic scope" value="Bacteria"/>
</dbReference>
<dbReference type="HOGENOM" id="CLU_009995_3_3_7"/>
<dbReference type="OrthoDB" id="9801591at2"/>
<dbReference type="Proteomes" id="UP000008825">
    <property type="component" value="Chromosome"/>
</dbReference>
<dbReference type="GO" id="GO:0005886">
    <property type="term" value="C:plasma membrane"/>
    <property type="evidence" value="ECO:0007669"/>
    <property type="project" value="UniProtKB-SubCell"/>
</dbReference>
<dbReference type="GO" id="GO:0005525">
    <property type="term" value="F:GTP binding"/>
    <property type="evidence" value="ECO:0007669"/>
    <property type="project" value="UniProtKB-UniRule"/>
</dbReference>
<dbReference type="GO" id="GO:0003924">
    <property type="term" value="F:GTPase activity"/>
    <property type="evidence" value="ECO:0007669"/>
    <property type="project" value="UniProtKB-UniRule"/>
</dbReference>
<dbReference type="GO" id="GO:0043022">
    <property type="term" value="F:ribosome binding"/>
    <property type="evidence" value="ECO:0007669"/>
    <property type="project" value="UniProtKB-UniRule"/>
</dbReference>
<dbReference type="GO" id="GO:0003746">
    <property type="term" value="F:translation elongation factor activity"/>
    <property type="evidence" value="ECO:0007669"/>
    <property type="project" value="UniProtKB-UniRule"/>
</dbReference>
<dbReference type="GO" id="GO:0045727">
    <property type="term" value="P:positive regulation of translation"/>
    <property type="evidence" value="ECO:0007669"/>
    <property type="project" value="UniProtKB-UniRule"/>
</dbReference>
<dbReference type="CDD" id="cd03699">
    <property type="entry name" value="EF4_II"/>
    <property type="match status" value="1"/>
</dbReference>
<dbReference type="CDD" id="cd16260">
    <property type="entry name" value="EF4_III"/>
    <property type="match status" value="1"/>
</dbReference>
<dbReference type="CDD" id="cd01890">
    <property type="entry name" value="LepA"/>
    <property type="match status" value="1"/>
</dbReference>
<dbReference type="CDD" id="cd03709">
    <property type="entry name" value="lepA_C"/>
    <property type="match status" value="1"/>
</dbReference>
<dbReference type="FunFam" id="3.40.50.300:FF:000078">
    <property type="entry name" value="Elongation factor 4"/>
    <property type="match status" value="1"/>
</dbReference>
<dbReference type="FunFam" id="2.40.30.10:FF:000015">
    <property type="entry name" value="Translation factor GUF1, mitochondrial"/>
    <property type="match status" value="1"/>
</dbReference>
<dbReference type="FunFam" id="3.30.70.240:FF:000007">
    <property type="entry name" value="Translation factor GUF1, mitochondrial"/>
    <property type="match status" value="1"/>
</dbReference>
<dbReference type="FunFam" id="3.30.70.2570:FF:000001">
    <property type="entry name" value="Translation factor GUF1, mitochondrial"/>
    <property type="match status" value="1"/>
</dbReference>
<dbReference type="FunFam" id="3.30.70.870:FF:000004">
    <property type="entry name" value="Translation factor GUF1, mitochondrial"/>
    <property type="match status" value="1"/>
</dbReference>
<dbReference type="Gene3D" id="3.30.70.240">
    <property type="match status" value="1"/>
</dbReference>
<dbReference type="Gene3D" id="3.30.70.2570">
    <property type="entry name" value="Elongation factor 4, C-terminal domain"/>
    <property type="match status" value="1"/>
</dbReference>
<dbReference type="Gene3D" id="3.30.70.870">
    <property type="entry name" value="Elongation Factor G (Translational Gtpase), domain 3"/>
    <property type="match status" value="1"/>
</dbReference>
<dbReference type="Gene3D" id="3.40.50.300">
    <property type="entry name" value="P-loop containing nucleotide triphosphate hydrolases"/>
    <property type="match status" value="1"/>
</dbReference>
<dbReference type="Gene3D" id="2.40.30.10">
    <property type="entry name" value="Translation factors"/>
    <property type="match status" value="1"/>
</dbReference>
<dbReference type="HAMAP" id="MF_00071">
    <property type="entry name" value="LepA"/>
    <property type="match status" value="1"/>
</dbReference>
<dbReference type="InterPro" id="IPR006297">
    <property type="entry name" value="EF-4"/>
</dbReference>
<dbReference type="InterPro" id="IPR035647">
    <property type="entry name" value="EFG_III/V"/>
</dbReference>
<dbReference type="InterPro" id="IPR000640">
    <property type="entry name" value="EFG_V-like"/>
</dbReference>
<dbReference type="InterPro" id="IPR004161">
    <property type="entry name" value="EFTu-like_2"/>
</dbReference>
<dbReference type="InterPro" id="IPR031157">
    <property type="entry name" value="G_TR_CS"/>
</dbReference>
<dbReference type="InterPro" id="IPR038363">
    <property type="entry name" value="LepA_C_sf"/>
</dbReference>
<dbReference type="InterPro" id="IPR013842">
    <property type="entry name" value="LepA_CTD"/>
</dbReference>
<dbReference type="InterPro" id="IPR035654">
    <property type="entry name" value="LepA_IV"/>
</dbReference>
<dbReference type="InterPro" id="IPR027417">
    <property type="entry name" value="P-loop_NTPase"/>
</dbReference>
<dbReference type="InterPro" id="IPR005225">
    <property type="entry name" value="Small_GTP-bd"/>
</dbReference>
<dbReference type="InterPro" id="IPR000795">
    <property type="entry name" value="T_Tr_GTP-bd_dom"/>
</dbReference>
<dbReference type="NCBIfam" id="TIGR01393">
    <property type="entry name" value="lepA"/>
    <property type="match status" value="1"/>
</dbReference>
<dbReference type="NCBIfam" id="TIGR00231">
    <property type="entry name" value="small_GTP"/>
    <property type="match status" value="1"/>
</dbReference>
<dbReference type="PANTHER" id="PTHR43512:SF4">
    <property type="entry name" value="TRANSLATION FACTOR GUF1 HOMOLOG, CHLOROPLASTIC"/>
    <property type="match status" value="1"/>
</dbReference>
<dbReference type="PANTHER" id="PTHR43512">
    <property type="entry name" value="TRANSLATION FACTOR GUF1-RELATED"/>
    <property type="match status" value="1"/>
</dbReference>
<dbReference type="Pfam" id="PF00679">
    <property type="entry name" value="EFG_C"/>
    <property type="match status" value="1"/>
</dbReference>
<dbReference type="Pfam" id="PF00009">
    <property type="entry name" value="GTP_EFTU"/>
    <property type="match status" value="1"/>
</dbReference>
<dbReference type="Pfam" id="PF03144">
    <property type="entry name" value="GTP_EFTU_D2"/>
    <property type="match status" value="1"/>
</dbReference>
<dbReference type="Pfam" id="PF06421">
    <property type="entry name" value="LepA_C"/>
    <property type="match status" value="1"/>
</dbReference>
<dbReference type="PRINTS" id="PR00315">
    <property type="entry name" value="ELONGATNFCT"/>
</dbReference>
<dbReference type="SUPFAM" id="SSF54980">
    <property type="entry name" value="EF-G C-terminal domain-like"/>
    <property type="match status" value="2"/>
</dbReference>
<dbReference type="SUPFAM" id="SSF52540">
    <property type="entry name" value="P-loop containing nucleoside triphosphate hydrolases"/>
    <property type="match status" value="1"/>
</dbReference>
<dbReference type="PROSITE" id="PS00301">
    <property type="entry name" value="G_TR_1"/>
    <property type="match status" value="1"/>
</dbReference>
<dbReference type="PROSITE" id="PS51722">
    <property type="entry name" value="G_TR_2"/>
    <property type="match status" value="1"/>
</dbReference>
<proteinExistence type="inferred from homology"/>
<reference key="1">
    <citation type="submission" date="2008-07" db="EMBL/GenBank/DDBJ databases">
        <title>Complete sequence of Geobacter bemidjiensis BEM.</title>
        <authorList>
            <consortium name="US DOE Joint Genome Institute"/>
            <person name="Lucas S."/>
            <person name="Copeland A."/>
            <person name="Lapidus A."/>
            <person name="Glavina del Rio T."/>
            <person name="Dalin E."/>
            <person name="Tice H."/>
            <person name="Bruce D."/>
            <person name="Goodwin L."/>
            <person name="Pitluck S."/>
            <person name="Kiss H."/>
            <person name="Brettin T."/>
            <person name="Detter J.C."/>
            <person name="Han C."/>
            <person name="Kuske C.R."/>
            <person name="Schmutz J."/>
            <person name="Larimer F."/>
            <person name="Land M."/>
            <person name="Hauser L."/>
            <person name="Kyrpides N."/>
            <person name="Lykidis A."/>
            <person name="Lovley D."/>
            <person name="Richardson P."/>
        </authorList>
    </citation>
    <scope>NUCLEOTIDE SEQUENCE [LARGE SCALE GENOMIC DNA]</scope>
    <source>
        <strain>ATCC BAA-1014 / DSM 16622 / JCM 12645 / Bem</strain>
    </source>
</reference>
<evidence type="ECO:0000255" key="1">
    <source>
        <dbReference type="HAMAP-Rule" id="MF_00071"/>
    </source>
</evidence>
<comment type="function">
    <text evidence="1">Required for accurate and efficient protein synthesis under certain stress conditions. May act as a fidelity factor of the translation reaction, by catalyzing a one-codon backward translocation of tRNAs on improperly translocated ribosomes. Back-translocation proceeds from a post-translocation (POST) complex to a pre-translocation (PRE) complex, thus giving elongation factor G a second chance to translocate the tRNAs correctly. Binds to ribosomes in a GTP-dependent manner.</text>
</comment>
<comment type="catalytic activity">
    <reaction evidence="1">
        <text>GTP + H2O = GDP + phosphate + H(+)</text>
        <dbReference type="Rhea" id="RHEA:19669"/>
        <dbReference type="ChEBI" id="CHEBI:15377"/>
        <dbReference type="ChEBI" id="CHEBI:15378"/>
        <dbReference type="ChEBI" id="CHEBI:37565"/>
        <dbReference type="ChEBI" id="CHEBI:43474"/>
        <dbReference type="ChEBI" id="CHEBI:58189"/>
        <dbReference type="EC" id="3.6.5.n1"/>
    </reaction>
</comment>
<comment type="subcellular location">
    <subcellularLocation>
        <location evidence="1">Cell inner membrane</location>
        <topology evidence="1">Peripheral membrane protein</topology>
        <orientation evidence="1">Cytoplasmic side</orientation>
    </subcellularLocation>
</comment>
<comment type="similarity">
    <text evidence="1">Belongs to the TRAFAC class translation factor GTPase superfamily. Classic translation factor GTPase family. LepA subfamily.</text>
</comment>
<accession>B5EB36</accession>
<sequence length="599" mass="67012">MVIEHIRNFSIIAHIDHGKSTLADRLLEFTGTVSAREKQDQFLDKMDLERERGITIKAQTVRLNYRADDGKDYILNLIDTPGHVDFTYEVSRSLTACEGGLLVVDASQGVEAQTLANVYLALDANLEVFVVLNKIDLPAAEPERVKAEIEEIIGLDTHDAVLASAKEGIGTKDILEEIVKKIPPPKGDATKPMKALLFDSWYDQYQGVIILVRLVDGTVKKGDKIQLMSNRKSYEVLKAGVFSPEMRETPMLSAGEVGFIIAGIREVADAKVGDTVTLLHNPCDAALPGYKEVKPMVFSGLYPIDTSQYEQLRDALAKLKLNDSSFSYDPETSLALGFGFRCGFLGLLHMEIIQERLEREFNLELITTAPTVVYRVHGTDGSLTSIQSANQLPPTQEIAYVEEPFILASIHVPNDFVGGILALCEEKRGVQREIKYLTPTRVMVVYELPLNEVVLDFYDRLKSITKGYASLDYELLDYRQSELVRLNIMINGEVVDALSLIIHKDKAYYRGRELVSKMKELIPRQMFEIAIQAAVGTKVIARETVKAMRKDVLAKCYGGDITRKRKLLEKQKEGKKRMKNVGNVELPQEAFLAILKVEG</sequence>